<sequence length="149" mass="16445">MVVEANCEIPENLYYYIDGKNTVWVKIEGSDIAVVGITDLAQTMAGKIVKIRIKKKGIKVERGRPVATLESGKWAGPVPAPVSGEVVDSNSEVEKSPVILNRDPYGQGWIAKIKISNQEEVKQLLTGQQAIQKLKEIITSEKLTCKRLQ</sequence>
<name>GCSH2_SULAC</name>
<accession>Q4JBR3</accession>
<comment type="function">
    <text evidence="1">The glycine cleavage system catalyzes the degradation of glycine. The H protein shuttles the methylamine group of glycine from the P protein to the T protein.</text>
</comment>
<comment type="cofactor">
    <cofactor evidence="1">
        <name>(R)-lipoate</name>
        <dbReference type="ChEBI" id="CHEBI:83088"/>
    </cofactor>
    <text evidence="1">Binds 1 lipoyl cofactor covalently.</text>
</comment>
<comment type="subunit">
    <text evidence="1">The glycine cleavage system is composed of four proteins: P, T, L and H.</text>
</comment>
<comment type="similarity">
    <text evidence="1">Belongs to the GcvH family.</text>
</comment>
<evidence type="ECO:0000255" key="1">
    <source>
        <dbReference type="HAMAP-Rule" id="MF_00272"/>
    </source>
</evidence>
<evidence type="ECO:0000255" key="2">
    <source>
        <dbReference type="PROSITE-ProRule" id="PRU01066"/>
    </source>
</evidence>
<proteinExistence type="inferred from homology"/>
<organism>
    <name type="scientific">Sulfolobus acidocaldarius (strain ATCC 33909 / DSM 639 / JCM 8929 / NBRC 15157 / NCIMB 11770)</name>
    <dbReference type="NCBI Taxonomy" id="330779"/>
    <lineage>
        <taxon>Archaea</taxon>
        <taxon>Thermoproteota</taxon>
        <taxon>Thermoprotei</taxon>
        <taxon>Sulfolobales</taxon>
        <taxon>Sulfolobaceae</taxon>
        <taxon>Sulfolobus</taxon>
    </lineage>
</organism>
<dbReference type="EMBL" id="CP000077">
    <property type="protein sequence ID" value="AAY79766.1"/>
    <property type="molecule type" value="Genomic_DNA"/>
</dbReference>
<dbReference type="RefSeq" id="WP_011277268.1">
    <property type="nucleotide sequence ID" value="NC_007181.1"/>
</dbReference>
<dbReference type="SMR" id="Q4JBR3"/>
<dbReference type="STRING" id="330779.Saci_0350"/>
<dbReference type="GeneID" id="14550879"/>
<dbReference type="KEGG" id="sai:Saci_0350"/>
<dbReference type="PATRIC" id="fig|330779.12.peg.346"/>
<dbReference type="eggNOG" id="arCOG01303">
    <property type="taxonomic scope" value="Archaea"/>
</dbReference>
<dbReference type="HOGENOM" id="CLU_097408_2_2_2"/>
<dbReference type="Proteomes" id="UP000001018">
    <property type="component" value="Chromosome"/>
</dbReference>
<dbReference type="GO" id="GO:0005737">
    <property type="term" value="C:cytoplasm"/>
    <property type="evidence" value="ECO:0007669"/>
    <property type="project" value="TreeGrafter"/>
</dbReference>
<dbReference type="GO" id="GO:0005960">
    <property type="term" value="C:glycine cleavage complex"/>
    <property type="evidence" value="ECO:0007669"/>
    <property type="project" value="InterPro"/>
</dbReference>
<dbReference type="GO" id="GO:0019464">
    <property type="term" value="P:glycine decarboxylation via glycine cleavage system"/>
    <property type="evidence" value="ECO:0007669"/>
    <property type="project" value="UniProtKB-UniRule"/>
</dbReference>
<dbReference type="CDD" id="cd06848">
    <property type="entry name" value="GCS_H"/>
    <property type="match status" value="1"/>
</dbReference>
<dbReference type="Gene3D" id="2.40.50.100">
    <property type="match status" value="1"/>
</dbReference>
<dbReference type="HAMAP" id="MF_00272">
    <property type="entry name" value="GcvH"/>
    <property type="match status" value="1"/>
</dbReference>
<dbReference type="InterPro" id="IPR003016">
    <property type="entry name" value="2-oxoA_DH_lipoyl-BS"/>
</dbReference>
<dbReference type="InterPro" id="IPR000089">
    <property type="entry name" value="Biotin_lipoyl"/>
</dbReference>
<dbReference type="InterPro" id="IPR002930">
    <property type="entry name" value="GCV_H"/>
</dbReference>
<dbReference type="InterPro" id="IPR033753">
    <property type="entry name" value="GCV_H/Fam206"/>
</dbReference>
<dbReference type="InterPro" id="IPR011053">
    <property type="entry name" value="Single_hybrid_motif"/>
</dbReference>
<dbReference type="NCBIfam" id="NF002270">
    <property type="entry name" value="PRK01202.1"/>
    <property type="match status" value="1"/>
</dbReference>
<dbReference type="PANTHER" id="PTHR11715">
    <property type="entry name" value="GLYCINE CLEAVAGE SYSTEM H PROTEIN"/>
    <property type="match status" value="1"/>
</dbReference>
<dbReference type="PANTHER" id="PTHR11715:SF3">
    <property type="entry name" value="GLYCINE CLEAVAGE SYSTEM H PROTEIN-RELATED"/>
    <property type="match status" value="1"/>
</dbReference>
<dbReference type="Pfam" id="PF01597">
    <property type="entry name" value="GCV_H"/>
    <property type="match status" value="1"/>
</dbReference>
<dbReference type="SUPFAM" id="SSF51230">
    <property type="entry name" value="Single hybrid motif"/>
    <property type="match status" value="1"/>
</dbReference>
<dbReference type="PROSITE" id="PS50968">
    <property type="entry name" value="BIOTINYL_LIPOYL"/>
    <property type="match status" value="1"/>
</dbReference>
<dbReference type="PROSITE" id="PS00189">
    <property type="entry name" value="LIPOYL"/>
    <property type="match status" value="1"/>
</dbReference>
<gene>
    <name evidence="1" type="primary">gcvH2</name>
    <name type="ordered locus">Saci_0350</name>
</gene>
<protein>
    <recommendedName>
        <fullName evidence="1">Probable glycine cleavage system H protein 2</fullName>
    </recommendedName>
</protein>
<feature type="chain" id="PRO_0000166280" description="Probable glycine cleavage system H protein 2">
    <location>
        <begin position="1"/>
        <end position="149"/>
    </location>
</feature>
<feature type="domain" description="Lipoyl-binding" evidence="2">
    <location>
        <begin position="32"/>
        <end position="114"/>
    </location>
</feature>
<feature type="modified residue" description="N6-lipoyllysine" evidence="1">
    <location>
        <position position="73"/>
    </location>
</feature>
<keyword id="KW-0450">Lipoyl</keyword>
<keyword id="KW-1185">Reference proteome</keyword>
<reference key="1">
    <citation type="journal article" date="2005" name="J. Bacteriol.">
        <title>The genome of Sulfolobus acidocaldarius, a model organism of the Crenarchaeota.</title>
        <authorList>
            <person name="Chen L."/>
            <person name="Bruegger K."/>
            <person name="Skovgaard M."/>
            <person name="Redder P."/>
            <person name="She Q."/>
            <person name="Torarinsson E."/>
            <person name="Greve B."/>
            <person name="Awayez M."/>
            <person name="Zibat A."/>
            <person name="Klenk H.-P."/>
            <person name="Garrett R.A."/>
        </authorList>
    </citation>
    <scope>NUCLEOTIDE SEQUENCE [LARGE SCALE GENOMIC DNA]</scope>
    <source>
        <strain>ATCC 33909 / DSM 639 / JCM 8929 / NBRC 15157 / NCIMB 11770</strain>
    </source>
</reference>